<reference key="1">
    <citation type="journal article" date="1998" name="Science">
        <title>Genome sequence of the nematode C. elegans: a platform for investigating biology.</title>
        <authorList>
            <consortium name="The C. elegans sequencing consortium"/>
        </authorList>
    </citation>
    <scope>NUCLEOTIDE SEQUENCE [LARGE SCALE GENOMIC DNA]</scope>
    <source>
        <strain>Bristol N2</strain>
    </source>
</reference>
<gene>
    <name type="primary">gstk-1</name>
    <name type="ORF">ZK1320.1</name>
</gene>
<comment type="catalytic activity">
    <reaction>
        <text>RX + glutathione = an S-substituted glutathione + a halide anion + H(+)</text>
        <dbReference type="Rhea" id="RHEA:16437"/>
        <dbReference type="ChEBI" id="CHEBI:15378"/>
        <dbReference type="ChEBI" id="CHEBI:16042"/>
        <dbReference type="ChEBI" id="CHEBI:17792"/>
        <dbReference type="ChEBI" id="CHEBI:57925"/>
        <dbReference type="ChEBI" id="CHEBI:90779"/>
        <dbReference type="EC" id="2.5.1.18"/>
    </reaction>
</comment>
<comment type="similarity">
    <text evidence="2">Belongs to the GST superfamily. Kappa family.</text>
</comment>
<sequence length="226" mass="26482">MPKLPRIDFYFDVISPYSYIAFEVFQKLETQWKGVTIRYIPFFLGAVMKESGNRPPAMLPARSIMMMTDLKRTAKFWDIPLTPPPLFMEWIKKYRTTGAMKVLLVLQEQDKELMLRAAREMWVRLWSRSEKIFEDQDFVEVLKAVGVKNPEQIVEKSKDEKYIKILMENTNKGVDLMAYGAPWINVHTEDGSEHSFFGSDRFHLIADLLQQPQPLPDRLFGQKSKL</sequence>
<evidence type="ECO:0000250" key="1"/>
<evidence type="ECO:0000305" key="2"/>
<keyword id="KW-1185">Reference proteome</keyword>
<keyword id="KW-0808">Transferase</keyword>
<dbReference type="EC" id="2.5.1.18"/>
<dbReference type="EMBL" id="Z46934">
    <property type="protein sequence ID" value="CAA87039.1"/>
    <property type="molecule type" value="Genomic_DNA"/>
</dbReference>
<dbReference type="PIR" id="T27747">
    <property type="entry name" value="T27747"/>
</dbReference>
<dbReference type="RefSeq" id="NP_496082.1">
    <property type="nucleotide sequence ID" value="NM_063681.3"/>
</dbReference>
<dbReference type="SMR" id="Q09652"/>
<dbReference type="BioGRID" id="56093">
    <property type="interactions" value="5"/>
</dbReference>
<dbReference type="FunCoup" id="Q09652">
    <property type="interactions" value="649"/>
</dbReference>
<dbReference type="IntAct" id="Q09652">
    <property type="interactions" value="1"/>
</dbReference>
<dbReference type="STRING" id="6239.ZK1320.1.1"/>
<dbReference type="PaxDb" id="6239-ZK1320.1"/>
<dbReference type="PeptideAtlas" id="Q09652"/>
<dbReference type="EnsemblMetazoa" id="ZK1320.1.1">
    <property type="protein sequence ID" value="ZK1320.1.1"/>
    <property type="gene ID" value="WBGene00014251"/>
</dbReference>
<dbReference type="GeneID" id="191563"/>
<dbReference type="KEGG" id="cel:CELE_ZK1320.1"/>
<dbReference type="AGR" id="WB:WBGene00014251"/>
<dbReference type="CTD" id="191563"/>
<dbReference type="WormBase" id="ZK1320.1">
    <property type="protein sequence ID" value="CE01698"/>
    <property type="gene ID" value="WBGene00014251"/>
    <property type="gene designation" value="gstk-1"/>
</dbReference>
<dbReference type="eggNOG" id="ENOG502RH77">
    <property type="taxonomic scope" value="Eukaryota"/>
</dbReference>
<dbReference type="GeneTree" id="ENSGT00440000033697"/>
<dbReference type="HOGENOM" id="CLU_069253_1_1_1"/>
<dbReference type="InParanoid" id="Q09652"/>
<dbReference type="OMA" id="FNHIYRF"/>
<dbReference type="OrthoDB" id="4664297at2759"/>
<dbReference type="PhylomeDB" id="Q09652"/>
<dbReference type="PRO" id="PR:Q09652"/>
<dbReference type="Proteomes" id="UP000001940">
    <property type="component" value="Chromosome II"/>
</dbReference>
<dbReference type="Bgee" id="WBGene00014251">
    <property type="expression patterns" value="Expressed in larva and 4 other cell types or tissues"/>
</dbReference>
<dbReference type="GO" id="GO:0005739">
    <property type="term" value="C:mitochondrion"/>
    <property type="evidence" value="ECO:0000318"/>
    <property type="project" value="GO_Central"/>
</dbReference>
<dbReference type="GO" id="GO:0005777">
    <property type="term" value="C:peroxisome"/>
    <property type="evidence" value="ECO:0000314"/>
    <property type="project" value="WormBase"/>
</dbReference>
<dbReference type="GO" id="GO:0004602">
    <property type="term" value="F:glutathione peroxidase activity"/>
    <property type="evidence" value="ECO:0000318"/>
    <property type="project" value="GO_Central"/>
</dbReference>
<dbReference type="GO" id="GO:0004364">
    <property type="term" value="F:glutathione transferase activity"/>
    <property type="evidence" value="ECO:0000318"/>
    <property type="project" value="GO_Central"/>
</dbReference>
<dbReference type="GO" id="GO:0006749">
    <property type="term" value="P:glutathione metabolic process"/>
    <property type="evidence" value="ECO:0000318"/>
    <property type="project" value="GO_Central"/>
</dbReference>
<dbReference type="GO" id="GO:0045087">
    <property type="term" value="P:innate immune response"/>
    <property type="evidence" value="ECO:0007007"/>
    <property type="project" value="WormBase"/>
</dbReference>
<dbReference type="CDD" id="cd03021">
    <property type="entry name" value="DsbA_GSTK"/>
    <property type="match status" value="1"/>
</dbReference>
<dbReference type="FunFam" id="3.40.30.10:FF:000096">
    <property type="entry name" value="Glutathione S-transferase kappa"/>
    <property type="match status" value="1"/>
</dbReference>
<dbReference type="Gene3D" id="3.40.30.10">
    <property type="entry name" value="Glutaredoxin"/>
    <property type="match status" value="1"/>
</dbReference>
<dbReference type="InterPro" id="IPR001853">
    <property type="entry name" value="DSBA-like_thioredoxin_dom"/>
</dbReference>
<dbReference type="InterPro" id="IPR051924">
    <property type="entry name" value="GST_Kappa/NadH"/>
</dbReference>
<dbReference type="InterPro" id="IPR044088">
    <property type="entry name" value="GSTK"/>
</dbReference>
<dbReference type="InterPro" id="IPR014440">
    <property type="entry name" value="HCCAis_GSTk"/>
</dbReference>
<dbReference type="InterPro" id="IPR036249">
    <property type="entry name" value="Thioredoxin-like_sf"/>
</dbReference>
<dbReference type="PANTHER" id="PTHR42943">
    <property type="entry name" value="GLUTATHIONE S-TRANSFERASE KAPPA"/>
    <property type="match status" value="1"/>
</dbReference>
<dbReference type="PANTHER" id="PTHR42943:SF3">
    <property type="entry name" value="GLUTATHIONE S-TRANSFERASE KAPPA 1"/>
    <property type="match status" value="1"/>
</dbReference>
<dbReference type="Pfam" id="PF01323">
    <property type="entry name" value="DSBA"/>
    <property type="match status" value="1"/>
</dbReference>
<dbReference type="PIRSF" id="PIRSF006386">
    <property type="entry name" value="HCCAis_GSTk"/>
    <property type="match status" value="1"/>
</dbReference>
<dbReference type="SUPFAM" id="SSF52833">
    <property type="entry name" value="Thioredoxin-like"/>
    <property type="match status" value="1"/>
</dbReference>
<protein>
    <recommendedName>
        <fullName>Glutathione S-transferase kappa 1</fullName>
        <ecNumber>2.5.1.18</ecNumber>
    </recommendedName>
    <alternativeName>
        <fullName>GST class-kappa</fullName>
    </alternativeName>
</protein>
<feature type="chain" id="PRO_0000185895" description="Glutathione S-transferase kappa 1">
    <location>
        <begin position="1"/>
        <end position="226"/>
    </location>
</feature>
<feature type="binding site" evidence="1">
    <location>
        <begin position="15"/>
        <end position="17"/>
    </location>
    <ligand>
        <name>glutathione</name>
        <dbReference type="ChEBI" id="CHEBI:57925"/>
    </ligand>
</feature>
<feature type="binding site" evidence="1">
    <location>
        <position position="53"/>
    </location>
    <ligand>
        <name>glutathione</name>
        <dbReference type="ChEBI" id="CHEBI:57925"/>
    </ligand>
</feature>
<feature type="binding site" evidence="1">
    <location>
        <begin position="199"/>
        <end position="200"/>
    </location>
    <ligand>
        <name>glutathione</name>
        <dbReference type="ChEBI" id="CHEBI:57925"/>
    </ligand>
</feature>
<proteinExistence type="inferred from homology"/>
<organism>
    <name type="scientific">Caenorhabditis elegans</name>
    <dbReference type="NCBI Taxonomy" id="6239"/>
    <lineage>
        <taxon>Eukaryota</taxon>
        <taxon>Metazoa</taxon>
        <taxon>Ecdysozoa</taxon>
        <taxon>Nematoda</taxon>
        <taxon>Chromadorea</taxon>
        <taxon>Rhabditida</taxon>
        <taxon>Rhabditina</taxon>
        <taxon>Rhabditomorpha</taxon>
        <taxon>Rhabditoidea</taxon>
        <taxon>Rhabditidae</taxon>
        <taxon>Peloderinae</taxon>
        <taxon>Caenorhabditis</taxon>
    </lineage>
</organism>
<accession>Q09652</accession>
<name>GSTK1_CAEEL</name>